<comment type="function">
    <text evidence="1">Catalyzes the formation of phosphatidylethanolamine (PtdEtn) from phosphatidylserine (PtdSer).</text>
</comment>
<comment type="catalytic activity">
    <reaction evidence="1">
        <text>a 1,2-diacyl-sn-glycero-3-phospho-L-serine + H(+) = a 1,2-diacyl-sn-glycero-3-phosphoethanolamine + CO2</text>
        <dbReference type="Rhea" id="RHEA:20828"/>
        <dbReference type="ChEBI" id="CHEBI:15378"/>
        <dbReference type="ChEBI" id="CHEBI:16526"/>
        <dbReference type="ChEBI" id="CHEBI:57262"/>
        <dbReference type="ChEBI" id="CHEBI:64612"/>
        <dbReference type="EC" id="4.1.1.65"/>
    </reaction>
</comment>
<comment type="cofactor">
    <cofactor evidence="1">
        <name>pyruvate</name>
        <dbReference type="ChEBI" id="CHEBI:15361"/>
    </cofactor>
    <text evidence="1">Binds 1 pyruvoyl group covalently per subunit.</text>
</comment>
<comment type="pathway">
    <text evidence="1">Phospholipid metabolism; phosphatidylethanolamine biosynthesis; phosphatidylethanolamine from CDP-diacylglycerol: step 2/2.</text>
</comment>
<comment type="subunit">
    <text evidence="1">Heterodimer of a large membrane-associated beta subunit and a small pyruvoyl-containing alpha subunit.</text>
</comment>
<comment type="subcellular location">
    <subcellularLocation>
        <location evidence="1">Cell membrane</location>
        <topology evidence="1">Peripheral membrane protein</topology>
    </subcellularLocation>
</comment>
<comment type="PTM">
    <text evidence="1">Is synthesized initially as an inactive proenzyme. Formation of the active enzyme involves a self-maturation process in which the active site pyruvoyl group is generated from an internal serine residue via an autocatalytic post-translational modification. Two non-identical subunits are generated from the proenzyme in this reaction, and the pyruvate is formed at the N-terminus of the alpha chain, which is derived from the carboxyl end of the proenzyme. The autoendoproteolytic cleavage occurs by a canonical serine protease mechanism, in which the side chain hydroxyl group of the serine supplies its oxygen atom to form the C-terminus of the beta chain, while the remainder of the serine residue undergoes an oxidative deamination to produce ammonia and the pyruvoyl prosthetic group on the alpha chain. During this reaction, the Ser that is part of the protease active site of the proenzyme becomes the pyruvoyl prosthetic group, which constitutes an essential element of the active site of the mature decarboxylase.</text>
</comment>
<comment type="similarity">
    <text evidence="1">Belongs to the phosphatidylserine decarboxylase family. PSD-B subfamily. Prokaryotic type II sub-subfamily.</text>
</comment>
<accession>Q97KW7</accession>
<proteinExistence type="inferred from homology"/>
<feature type="chain" id="PRO_0000029737" description="Phosphatidylserine decarboxylase 2 beta chain" evidence="1">
    <location>
        <begin position="1"/>
        <end position="250"/>
    </location>
</feature>
<feature type="chain" id="PRO_0000029738" description="Phosphatidylserine decarboxylase 2 alpha chain" evidence="1">
    <location>
        <begin position="251"/>
        <end position="291"/>
    </location>
</feature>
<feature type="active site" description="Charge relay system; for autoendoproteolytic cleavage activity" evidence="1">
    <location>
        <position position="112"/>
    </location>
</feature>
<feature type="active site" description="Charge relay system; for autoendoproteolytic cleavage activity" evidence="1">
    <location>
        <position position="251"/>
    </location>
</feature>
<feature type="active site" description="Schiff-base intermediate with substrate; via pyruvic acid; for decarboxylase activity" evidence="1">
    <location>
        <position position="251"/>
    </location>
</feature>
<feature type="site" description="Cleavage (non-hydrolytic); by autocatalysis" evidence="1">
    <location>
        <begin position="250"/>
        <end position="251"/>
    </location>
</feature>
<feature type="modified residue" description="Pyruvic acid (Ser); by autocatalysis" evidence="1">
    <location>
        <position position="251"/>
    </location>
</feature>
<sequence length="291" mass="34070">MSITIFNRDLKEIYYEKQYKNGQLKFLYNTILGRMLLKLFISTRLFSKINAIFNNNKGSIKKIEPFINEYKIDMSEYEKKEYTSFDDFFTRKILEGKRSFSKEKSHLISPADSKLMVYEIDDDLKMNIKNSIYTVGELLNDEKLSREYKNGTCLIFRLTVDDYHRYCFIDDGSLKYRKVINGRLHTVGPISSKRYKVYSENNREYSVLKTRNFGKVIQIEVGALLVGKIKNHSIKVFKKGDEKGYFCFGGSTIVLLFKEKVIKMDEDILEYSKAGIETKIKMGEKIGETND</sequence>
<evidence type="ECO:0000255" key="1">
    <source>
        <dbReference type="HAMAP-Rule" id="MF_00663"/>
    </source>
</evidence>
<name>PSD2_CLOAB</name>
<dbReference type="EC" id="4.1.1.65" evidence="1"/>
<dbReference type="EMBL" id="AE001437">
    <property type="protein sequence ID" value="AAK78775.1"/>
    <property type="molecule type" value="Genomic_DNA"/>
</dbReference>
<dbReference type="PIR" id="D96998">
    <property type="entry name" value="D96998"/>
</dbReference>
<dbReference type="RefSeq" id="NP_347435.1">
    <property type="nucleotide sequence ID" value="NC_003030.1"/>
</dbReference>
<dbReference type="RefSeq" id="WP_010964117.1">
    <property type="nucleotide sequence ID" value="NC_003030.1"/>
</dbReference>
<dbReference type="SMR" id="Q97KW7"/>
<dbReference type="STRING" id="272562.CA_C0799"/>
<dbReference type="KEGG" id="cac:CA_C0799"/>
<dbReference type="PATRIC" id="fig|272562.8.peg.1004"/>
<dbReference type="eggNOG" id="COG0688">
    <property type="taxonomic scope" value="Bacteria"/>
</dbReference>
<dbReference type="HOGENOM" id="CLU_029061_2_2_9"/>
<dbReference type="OrthoDB" id="9802030at2"/>
<dbReference type="UniPathway" id="UPA00558">
    <property type="reaction ID" value="UER00616"/>
</dbReference>
<dbReference type="Proteomes" id="UP000000814">
    <property type="component" value="Chromosome"/>
</dbReference>
<dbReference type="GO" id="GO:0005886">
    <property type="term" value="C:plasma membrane"/>
    <property type="evidence" value="ECO:0007669"/>
    <property type="project" value="UniProtKB-SubCell"/>
</dbReference>
<dbReference type="GO" id="GO:0004609">
    <property type="term" value="F:phosphatidylserine decarboxylase activity"/>
    <property type="evidence" value="ECO:0007669"/>
    <property type="project" value="UniProtKB-UniRule"/>
</dbReference>
<dbReference type="GO" id="GO:0006646">
    <property type="term" value="P:phosphatidylethanolamine biosynthetic process"/>
    <property type="evidence" value="ECO:0007669"/>
    <property type="project" value="UniProtKB-UniRule"/>
</dbReference>
<dbReference type="HAMAP" id="MF_00663">
    <property type="entry name" value="PS_decarb_PSD_B_type2"/>
    <property type="match status" value="1"/>
</dbReference>
<dbReference type="InterPro" id="IPR003817">
    <property type="entry name" value="PS_Dcarbxylase"/>
</dbReference>
<dbReference type="InterPro" id="IPR033179">
    <property type="entry name" value="PSD_type2_pro"/>
</dbReference>
<dbReference type="PANTHER" id="PTHR10067">
    <property type="entry name" value="PHOSPHATIDYLSERINE DECARBOXYLASE"/>
    <property type="match status" value="1"/>
</dbReference>
<dbReference type="PANTHER" id="PTHR10067:SF17">
    <property type="entry name" value="PHOSPHATIDYLSERINE DECARBOXYLASE PROENZYME 2"/>
    <property type="match status" value="1"/>
</dbReference>
<dbReference type="Pfam" id="PF02666">
    <property type="entry name" value="PS_Dcarbxylase"/>
    <property type="match status" value="1"/>
</dbReference>
<gene>
    <name evidence="1" type="primary">psd2</name>
    <name type="ordered locus">CA_C0799</name>
</gene>
<organism>
    <name type="scientific">Clostridium acetobutylicum (strain ATCC 824 / DSM 792 / JCM 1419 / IAM 19013 / LMG 5710 / NBRC 13948 / NRRL B-527 / VKM B-1787 / 2291 / W)</name>
    <dbReference type="NCBI Taxonomy" id="272562"/>
    <lineage>
        <taxon>Bacteria</taxon>
        <taxon>Bacillati</taxon>
        <taxon>Bacillota</taxon>
        <taxon>Clostridia</taxon>
        <taxon>Eubacteriales</taxon>
        <taxon>Clostridiaceae</taxon>
        <taxon>Clostridium</taxon>
    </lineage>
</organism>
<protein>
    <recommendedName>
        <fullName evidence="1">Phosphatidylserine decarboxylase proenzyme 2</fullName>
        <ecNumber evidence="1">4.1.1.65</ecNumber>
    </recommendedName>
    <component>
        <recommendedName>
            <fullName evidence="1">Phosphatidylserine decarboxylase 2 alpha chain</fullName>
        </recommendedName>
    </component>
    <component>
        <recommendedName>
            <fullName evidence="1">Phosphatidylserine decarboxylase 2 beta chain</fullName>
        </recommendedName>
    </component>
</protein>
<reference key="1">
    <citation type="journal article" date="2001" name="J. Bacteriol.">
        <title>Genome sequence and comparative analysis of the solvent-producing bacterium Clostridium acetobutylicum.</title>
        <authorList>
            <person name="Noelling J."/>
            <person name="Breton G."/>
            <person name="Omelchenko M.V."/>
            <person name="Makarova K.S."/>
            <person name="Zeng Q."/>
            <person name="Gibson R."/>
            <person name="Lee H.M."/>
            <person name="Dubois J."/>
            <person name="Qiu D."/>
            <person name="Hitti J."/>
            <person name="Wolf Y.I."/>
            <person name="Tatusov R.L."/>
            <person name="Sabathe F."/>
            <person name="Doucette-Stamm L.A."/>
            <person name="Soucaille P."/>
            <person name="Daly M.J."/>
            <person name="Bennett G.N."/>
            <person name="Koonin E.V."/>
            <person name="Smith D.R."/>
        </authorList>
    </citation>
    <scope>NUCLEOTIDE SEQUENCE [LARGE SCALE GENOMIC DNA]</scope>
    <source>
        <strain>ATCC 824 / DSM 792 / JCM 1419 / IAM 19013 / LMG 5710 / NBRC 13948 / NRRL B-527 / VKM B-1787 / 2291 / W</strain>
    </source>
</reference>
<keyword id="KW-1003">Cell membrane</keyword>
<keyword id="KW-0210">Decarboxylase</keyword>
<keyword id="KW-0444">Lipid biosynthesis</keyword>
<keyword id="KW-0443">Lipid metabolism</keyword>
<keyword id="KW-0456">Lyase</keyword>
<keyword id="KW-0472">Membrane</keyword>
<keyword id="KW-0594">Phospholipid biosynthesis</keyword>
<keyword id="KW-1208">Phospholipid metabolism</keyword>
<keyword id="KW-0670">Pyruvate</keyword>
<keyword id="KW-1185">Reference proteome</keyword>
<keyword id="KW-0865">Zymogen</keyword>